<gene>
    <name type="primary">DHDH</name>
</gene>
<name>DHDH_BOVIN</name>
<accession>Q148L6</accession>
<sequence length="335" mass="36583">MALRWGIVSAGLISSDFTTMLRMLPRSEHQVVAVAARDLSRAKEFAKKHDIPKAYGSYEELAKDPDVEVAYIGTQHPQHKAAVLLCLTAGKAVLCEKPMGVNAAEVREMVAEARSRGLFFMEAIWTRFFPAVEALRSVLAQGTLGDLRVVRAEFGKNLTHVHRATDWAQAGGGLLDLGIYCLQFISMVFGGQKPEKISAVGRRHETGVDDTVTVILQYPGGVHGSFTCSISAQLSNTVSVSGTKGMAQLLDPCWSPTELVVKGEHKEFPLPPAPGKEFNFTNGMGMSYEAKHVRECLQKGLKESPVIPLVESELLADILEEVRKAIGITFPQDKH</sequence>
<comment type="catalytic activity">
    <reaction>
        <text>(1R,2R)-1,2-dihydrobenzene-1,2-diol + NADP(+) = catechol + NADPH + H(+)</text>
        <dbReference type="Rhea" id="RHEA:16729"/>
        <dbReference type="ChEBI" id="CHEBI:10702"/>
        <dbReference type="ChEBI" id="CHEBI:15378"/>
        <dbReference type="ChEBI" id="CHEBI:18135"/>
        <dbReference type="ChEBI" id="CHEBI:57783"/>
        <dbReference type="ChEBI" id="CHEBI:58349"/>
        <dbReference type="EC" id="1.3.1.20"/>
    </reaction>
</comment>
<comment type="catalytic activity">
    <reaction>
        <text>D-xylose + NADP(+) = D-xylono-1,5-lactone + NADPH + H(+)</text>
        <dbReference type="Rhea" id="RHEA:22000"/>
        <dbReference type="ChEBI" id="CHEBI:15378"/>
        <dbReference type="ChEBI" id="CHEBI:15867"/>
        <dbReference type="ChEBI" id="CHEBI:53455"/>
        <dbReference type="ChEBI" id="CHEBI:57783"/>
        <dbReference type="ChEBI" id="CHEBI:58349"/>
        <dbReference type="EC" id="1.1.1.179"/>
    </reaction>
</comment>
<comment type="subunit">
    <text evidence="1">Homodimer.</text>
</comment>
<comment type="similarity">
    <text evidence="2">Belongs to the Gfo/Idh/MocA family.</text>
</comment>
<keyword id="KW-0521">NADP</keyword>
<keyword id="KW-0560">Oxidoreductase</keyword>
<keyword id="KW-1185">Reference proteome</keyword>
<dbReference type="EC" id="1.3.1.20"/>
<dbReference type="EC" id="1.1.1.179"/>
<dbReference type="EMBL" id="BC118168">
    <property type="protein sequence ID" value="AAI18169.1"/>
    <property type="molecule type" value="mRNA"/>
</dbReference>
<dbReference type="RefSeq" id="NP_001069937.1">
    <property type="nucleotide sequence ID" value="NM_001076469.1"/>
</dbReference>
<dbReference type="SMR" id="Q148L6"/>
<dbReference type="FunCoup" id="Q148L6">
    <property type="interactions" value="742"/>
</dbReference>
<dbReference type="STRING" id="9913.ENSBTAP00000040682"/>
<dbReference type="PaxDb" id="9913-ENSBTAP00000040682"/>
<dbReference type="GeneID" id="617564"/>
<dbReference type="KEGG" id="bta:617564"/>
<dbReference type="CTD" id="27294"/>
<dbReference type="VEuPathDB" id="HostDB:ENSBTAG00000013337"/>
<dbReference type="eggNOG" id="KOG2741">
    <property type="taxonomic scope" value="Eukaryota"/>
</dbReference>
<dbReference type="HOGENOM" id="CLU_023194_7_2_1"/>
<dbReference type="InParanoid" id="Q148L6"/>
<dbReference type="OMA" id="AHETGKY"/>
<dbReference type="OrthoDB" id="2129491at2759"/>
<dbReference type="TreeFam" id="TF324504"/>
<dbReference type="BRENDA" id="1.3.1.20">
    <property type="organism ID" value="908"/>
</dbReference>
<dbReference type="Proteomes" id="UP000009136">
    <property type="component" value="Chromosome 18"/>
</dbReference>
<dbReference type="Bgee" id="ENSBTAG00000013337">
    <property type="expression patterns" value="Expressed in biceps femoris and 103 other cell types or tissues"/>
</dbReference>
<dbReference type="GO" id="GO:0047837">
    <property type="term" value="F:D-xylose 1-dehydrogenase (NADP+) activity"/>
    <property type="evidence" value="ECO:0000318"/>
    <property type="project" value="GO_Central"/>
</dbReference>
<dbReference type="GO" id="GO:0000166">
    <property type="term" value="F:nucleotide binding"/>
    <property type="evidence" value="ECO:0007669"/>
    <property type="project" value="InterPro"/>
</dbReference>
<dbReference type="GO" id="GO:0047115">
    <property type="term" value="F:trans-1,2-dihydrobenzene-1,2-diol dehydrogenase activity"/>
    <property type="evidence" value="ECO:0007669"/>
    <property type="project" value="UniProtKB-EC"/>
</dbReference>
<dbReference type="GO" id="GO:0042843">
    <property type="term" value="P:D-xylose catabolic process"/>
    <property type="evidence" value="ECO:0000318"/>
    <property type="project" value="GO_Central"/>
</dbReference>
<dbReference type="FunFam" id="3.30.360.10:FF:000031">
    <property type="entry name" value="Trans-1,2-dihydrobenzene-1,2-diol dehydrogenase"/>
    <property type="match status" value="1"/>
</dbReference>
<dbReference type="FunFam" id="3.40.50.720:FF:000269">
    <property type="entry name" value="Trans-1,2-dihydrobenzene-1,2-diol dehydrogenase"/>
    <property type="match status" value="1"/>
</dbReference>
<dbReference type="Gene3D" id="3.30.360.10">
    <property type="entry name" value="Dihydrodipicolinate Reductase, domain 2"/>
    <property type="match status" value="1"/>
</dbReference>
<dbReference type="Gene3D" id="3.40.50.720">
    <property type="entry name" value="NAD(P)-binding Rossmann-like Domain"/>
    <property type="match status" value="1"/>
</dbReference>
<dbReference type="InterPro" id="IPR000683">
    <property type="entry name" value="Gfo/Idh/MocA-like_OxRdtase_N"/>
</dbReference>
<dbReference type="InterPro" id="IPR050984">
    <property type="entry name" value="Gfo/Idh/MocA_domain"/>
</dbReference>
<dbReference type="InterPro" id="IPR055170">
    <property type="entry name" value="GFO_IDH_MocA-like_dom"/>
</dbReference>
<dbReference type="InterPro" id="IPR036291">
    <property type="entry name" value="NAD(P)-bd_dom_sf"/>
</dbReference>
<dbReference type="PANTHER" id="PTHR22604">
    <property type="entry name" value="OXIDOREDUCTASES"/>
    <property type="match status" value="1"/>
</dbReference>
<dbReference type="PANTHER" id="PTHR22604:SF105">
    <property type="entry name" value="TRANS-1,2-DIHYDROBENZENE-1,2-DIOL DEHYDROGENASE"/>
    <property type="match status" value="1"/>
</dbReference>
<dbReference type="Pfam" id="PF01408">
    <property type="entry name" value="GFO_IDH_MocA"/>
    <property type="match status" value="1"/>
</dbReference>
<dbReference type="Pfam" id="PF22725">
    <property type="entry name" value="GFO_IDH_MocA_C3"/>
    <property type="match status" value="1"/>
</dbReference>
<dbReference type="SUPFAM" id="SSF55347">
    <property type="entry name" value="Glyceraldehyde-3-phosphate dehydrogenase-like, C-terminal domain"/>
    <property type="match status" value="1"/>
</dbReference>
<dbReference type="SUPFAM" id="SSF51735">
    <property type="entry name" value="NAD(P)-binding Rossmann-fold domains"/>
    <property type="match status" value="1"/>
</dbReference>
<evidence type="ECO:0000250" key="1"/>
<evidence type="ECO:0000305" key="2"/>
<feature type="chain" id="PRO_0000315359" description="Trans-1,2-dihydrobenzene-1,2-diol dehydrogenase">
    <location>
        <begin position="1"/>
        <end position="335"/>
    </location>
</feature>
<feature type="site" description="May play an important role in coenzyme binding" evidence="1">
    <location>
        <position position="71"/>
    </location>
</feature>
<feature type="site" description="May play an important role in coenzyme binding" evidence="1">
    <location>
        <position position="79"/>
    </location>
</feature>
<feature type="site" description="May play an important role in coenzyme binding" evidence="1">
    <location>
        <position position="97"/>
    </location>
</feature>
<feature type="site" description="May play an important role for the adaptation of the alcohol substrate into the binding site" evidence="1">
    <location>
        <position position="176"/>
    </location>
</feature>
<feature type="site" description="May play an important role in catalytic activity" evidence="1">
    <location>
        <position position="180"/>
    </location>
</feature>
<reference key="1">
    <citation type="submission" date="2006-06" db="EMBL/GenBank/DDBJ databases">
        <authorList>
            <consortium name="NIH - Mammalian Gene Collection (MGC) project"/>
        </authorList>
    </citation>
    <scope>NUCLEOTIDE SEQUENCE [LARGE SCALE MRNA]</scope>
    <source>
        <strain>Hereford</strain>
        <tissue>Thalamus</tissue>
    </source>
</reference>
<organism>
    <name type="scientific">Bos taurus</name>
    <name type="common">Bovine</name>
    <dbReference type="NCBI Taxonomy" id="9913"/>
    <lineage>
        <taxon>Eukaryota</taxon>
        <taxon>Metazoa</taxon>
        <taxon>Chordata</taxon>
        <taxon>Craniata</taxon>
        <taxon>Vertebrata</taxon>
        <taxon>Euteleostomi</taxon>
        <taxon>Mammalia</taxon>
        <taxon>Eutheria</taxon>
        <taxon>Laurasiatheria</taxon>
        <taxon>Artiodactyla</taxon>
        <taxon>Ruminantia</taxon>
        <taxon>Pecora</taxon>
        <taxon>Bovidae</taxon>
        <taxon>Bovinae</taxon>
        <taxon>Bos</taxon>
    </lineage>
</organism>
<protein>
    <recommendedName>
        <fullName>Trans-1,2-dihydrobenzene-1,2-diol dehydrogenase</fullName>
        <ecNumber>1.3.1.20</ecNumber>
    </recommendedName>
    <alternativeName>
        <fullName>D-xylose 1-dehydrogenase</fullName>
    </alternativeName>
    <alternativeName>
        <fullName>D-xylose-NADP dehydrogenase</fullName>
        <ecNumber>1.1.1.179</ecNumber>
    </alternativeName>
    <alternativeName>
        <fullName>Dimeric dihydrodiol dehydrogenase</fullName>
    </alternativeName>
</protein>
<proteinExistence type="evidence at transcript level"/>